<accession>Q2L1K6</accession>
<gene>
    <name evidence="1" type="primary">aspS</name>
    <name type="ordered locus">BAV0115</name>
</gene>
<feature type="chain" id="PRO_0000235510" description="Aspartate--tRNA(Asp/Asn) ligase">
    <location>
        <begin position="1"/>
        <end position="596"/>
    </location>
</feature>
<feature type="region of interest" description="Aspartate" evidence="1">
    <location>
        <begin position="196"/>
        <end position="199"/>
    </location>
</feature>
<feature type="binding site" evidence="1">
    <location>
        <position position="172"/>
    </location>
    <ligand>
        <name>L-aspartate</name>
        <dbReference type="ChEBI" id="CHEBI:29991"/>
    </ligand>
</feature>
<feature type="binding site" evidence="1">
    <location>
        <begin position="218"/>
        <end position="220"/>
    </location>
    <ligand>
        <name>ATP</name>
        <dbReference type="ChEBI" id="CHEBI:30616"/>
    </ligand>
</feature>
<feature type="binding site" evidence="1">
    <location>
        <position position="218"/>
    </location>
    <ligand>
        <name>L-aspartate</name>
        <dbReference type="ChEBI" id="CHEBI:29991"/>
    </ligand>
</feature>
<feature type="binding site" evidence="1">
    <location>
        <position position="227"/>
    </location>
    <ligand>
        <name>ATP</name>
        <dbReference type="ChEBI" id="CHEBI:30616"/>
    </ligand>
</feature>
<feature type="binding site" evidence="1">
    <location>
        <position position="455"/>
    </location>
    <ligand>
        <name>L-aspartate</name>
        <dbReference type="ChEBI" id="CHEBI:29991"/>
    </ligand>
</feature>
<feature type="binding site" evidence="1">
    <location>
        <position position="489"/>
    </location>
    <ligand>
        <name>ATP</name>
        <dbReference type="ChEBI" id="CHEBI:30616"/>
    </ligand>
</feature>
<feature type="binding site" evidence="1">
    <location>
        <position position="496"/>
    </location>
    <ligand>
        <name>L-aspartate</name>
        <dbReference type="ChEBI" id="CHEBI:29991"/>
    </ligand>
</feature>
<feature type="binding site" evidence="1">
    <location>
        <begin position="541"/>
        <end position="544"/>
    </location>
    <ligand>
        <name>ATP</name>
        <dbReference type="ChEBI" id="CHEBI:30616"/>
    </ligand>
</feature>
<feature type="site" description="Important for tRNA non-discrimination" evidence="1">
    <location>
        <position position="30"/>
    </location>
</feature>
<feature type="site" description="Important for tRNA non-discrimination" evidence="1">
    <location>
        <position position="81"/>
    </location>
</feature>
<reference key="1">
    <citation type="journal article" date="2006" name="J. Bacteriol.">
        <title>Comparison of the genome sequence of the poultry pathogen Bordetella avium with those of B. bronchiseptica, B. pertussis, and B. parapertussis reveals extensive diversity in surface structures associated with host interaction.</title>
        <authorList>
            <person name="Sebaihia M."/>
            <person name="Preston A."/>
            <person name="Maskell D.J."/>
            <person name="Kuzmiak H."/>
            <person name="Connell T.D."/>
            <person name="King N.D."/>
            <person name="Orndorff P.E."/>
            <person name="Miyamoto D.M."/>
            <person name="Thomson N.R."/>
            <person name="Harris D."/>
            <person name="Goble A."/>
            <person name="Lord A."/>
            <person name="Murphy L."/>
            <person name="Quail M.A."/>
            <person name="Rutter S."/>
            <person name="Squares R."/>
            <person name="Squares S."/>
            <person name="Woodward J."/>
            <person name="Parkhill J."/>
            <person name="Temple L.M."/>
        </authorList>
    </citation>
    <scope>NUCLEOTIDE SEQUENCE [LARGE SCALE GENOMIC DNA]</scope>
    <source>
        <strain>197N</strain>
    </source>
</reference>
<name>SYDND_BORA1</name>
<proteinExistence type="inferred from homology"/>
<sequence>MRTCYTGQVCRDHLGQTVTLYGWVNRRRDHGGVIFIDLRDRTGLAQIVFDPDNAGAFGTAERLRNEFCVRVTGLVRERPQGTTNAELASGEVEVLCRDVEILNPSVTPPFQLDDDNLSETTRLTHRVLDLRRPQMQRNLMLRYRVSIEVRKFLDQLGFIDIETPMLTKSTPEGARDYLVPSRVNAGHFFALPQSPQLFKQMLMVSGFDRYYQITKCFRDEDLRADRQPEFTQIDCETSFLTETEIRAVFESMIRHVFKVVQNVDLPDPFPIMTWTEAMARFGSDKPDMRVNLEFTDVADIMRDVDFKVFASAATTQGSRVVALRVPGGGELSRSEIDAYTQFVGIYGAKGLAYIKVNDVAKGREGLQSPIVKNLHDAALAELVKRTGAQDGDIIFFGADRAKVVNDALGALRVKIGHSEFGKKTGLFSGGWRPLWVVDFPMFEYDEEEGRYTAAHHPFTSPKDGHEDFLETDPSQAFAKAYDMVLNGWEIGGGSVRIHREEVQSKVFRALKIGPDEAREKFGFLLDALQYGAPPHGGIAFGLDRIVTMMTGADSIRDVIAFPKTQRAQDLLTQAPSSVDDKQLRELHIRLRNTEVK</sequence>
<keyword id="KW-0030">Aminoacyl-tRNA synthetase</keyword>
<keyword id="KW-0067">ATP-binding</keyword>
<keyword id="KW-0963">Cytoplasm</keyword>
<keyword id="KW-0436">Ligase</keyword>
<keyword id="KW-0547">Nucleotide-binding</keyword>
<keyword id="KW-0648">Protein biosynthesis</keyword>
<keyword id="KW-1185">Reference proteome</keyword>
<organism>
    <name type="scientific">Bordetella avium (strain 197N)</name>
    <dbReference type="NCBI Taxonomy" id="360910"/>
    <lineage>
        <taxon>Bacteria</taxon>
        <taxon>Pseudomonadati</taxon>
        <taxon>Pseudomonadota</taxon>
        <taxon>Betaproteobacteria</taxon>
        <taxon>Burkholderiales</taxon>
        <taxon>Alcaligenaceae</taxon>
        <taxon>Bordetella</taxon>
    </lineage>
</organism>
<protein>
    <recommendedName>
        <fullName evidence="1">Aspartate--tRNA(Asp/Asn) ligase</fullName>
        <ecNumber evidence="1">6.1.1.23</ecNumber>
    </recommendedName>
    <alternativeName>
        <fullName evidence="1">Aspartyl-tRNA synthetase</fullName>
        <shortName evidence="1">AspRS</shortName>
    </alternativeName>
    <alternativeName>
        <fullName evidence="1">Non-discriminating aspartyl-tRNA synthetase</fullName>
        <shortName evidence="1">ND-AspRS</shortName>
    </alternativeName>
</protein>
<evidence type="ECO:0000255" key="1">
    <source>
        <dbReference type="HAMAP-Rule" id="MF_00044"/>
    </source>
</evidence>
<dbReference type="EC" id="6.1.1.23" evidence="1"/>
<dbReference type="EMBL" id="AM167904">
    <property type="protein sequence ID" value="CAJ47721.1"/>
    <property type="molecule type" value="Genomic_DNA"/>
</dbReference>
<dbReference type="RefSeq" id="WP_012415819.1">
    <property type="nucleotide sequence ID" value="NC_010645.1"/>
</dbReference>
<dbReference type="SMR" id="Q2L1K6"/>
<dbReference type="STRING" id="360910.BAV0115"/>
<dbReference type="GeneID" id="92936639"/>
<dbReference type="KEGG" id="bav:BAV0115"/>
<dbReference type="eggNOG" id="COG0173">
    <property type="taxonomic scope" value="Bacteria"/>
</dbReference>
<dbReference type="HOGENOM" id="CLU_014330_3_2_4"/>
<dbReference type="OrthoDB" id="9802326at2"/>
<dbReference type="Proteomes" id="UP000001977">
    <property type="component" value="Chromosome"/>
</dbReference>
<dbReference type="GO" id="GO:0005737">
    <property type="term" value="C:cytoplasm"/>
    <property type="evidence" value="ECO:0007669"/>
    <property type="project" value="UniProtKB-SubCell"/>
</dbReference>
<dbReference type="GO" id="GO:0004815">
    <property type="term" value="F:aspartate-tRNA ligase activity"/>
    <property type="evidence" value="ECO:0007669"/>
    <property type="project" value="UniProtKB-UniRule"/>
</dbReference>
<dbReference type="GO" id="GO:0050560">
    <property type="term" value="F:aspartate-tRNA(Asn) ligase activity"/>
    <property type="evidence" value="ECO:0007669"/>
    <property type="project" value="UniProtKB-EC"/>
</dbReference>
<dbReference type="GO" id="GO:0005524">
    <property type="term" value="F:ATP binding"/>
    <property type="evidence" value="ECO:0007669"/>
    <property type="project" value="UniProtKB-UniRule"/>
</dbReference>
<dbReference type="GO" id="GO:0003676">
    <property type="term" value="F:nucleic acid binding"/>
    <property type="evidence" value="ECO:0007669"/>
    <property type="project" value="InterPro"/>
</dbReference>
<dbReference type="GO" id="GO:0006422">
    <property type="term" value="P:aspartyl-tRNA aminoacylation"/>
    <property type="evidence" value="ECO:0007669"/>
    <property type="project" value="UniProtKB-UniRule"/>
</dbReference>
<dbReference type="CDD" id="cd00777">
    <property type="entry name" value="AspRS_core"/>
    <property type="match status" value="1"/>
</dbReference>
<dbReference type="CDD" id="cd04317">
    <property type="entry name" value="EcAspRS_like_N"/>
    <property type="match status" value="1"/>
</dbReference>
<dbReference type="Gene3D" id="3.30.930.10">
    <property type="entry name" value="Bira Bifunctional Protein, Domain 2"/>
    <property type="match status" value="1"/>
</dbReference>
<dbReference type="Gene3D" id="3.30.1360.30">
    <property type="entry name" value="GAD-like domain"/>
    <property type="match status" value="1"/>
</dbReference>
<dbReference type="Gene3D" id="2.40.50.140">
    <property type="entry name" value="Nucleic acid-binding proteins"/>
    <property type="match status" value="1"/>
</dbReference>
<dbReference type="HAMAP" id="MF_00044">
    <property type="entry name" value="Asp_tRNA_synth_type1"/>
    <property type="match status" value="1"/>
</dbReference>
<dbReference type="InterPro" id="IPR004364">
    <property type="entry name" value="Aa-tRNA-synt_II"/>
</dbReference>
<dbReference type="InterPro" id="IPR006195">
    <property type="entry name" value="aa-tRNA-synth_II"/>
</dbReference>
<dbReference type="InterPro" id="IPR045864">
    <property type="entry name" value="aa-tRNA-synth_II/BPL/LPL"/>
</dbReference>
<dbReference type="InterPro" id="IPR004524">
    <property type="entry name" value="Asp-tRNA-ligase_1"/>
</dbReference>
<dbReference type="InterPro" id="IPR047089">
    <property type="entry name" value="Asp-tRNA-ligase_1_N"/>
</dbReference>
<dbReference type="InterPro" id="IPR002312">
    <property type="entry name" value="Asp/Asn-tRNA-synth_IIb"/>
</dbReference>
<dbReference type="InterPro" id="IPR047090">
    <property type="entry name" value="AspRS_core"/>
</dbReference>
<dbReference type="InterPro" id="IPR004115">
    <property type="entry name" value="GAD-like_sf"/>
</dbReference>
<dbReference type="InterPro" id="IPR029351">
    <property type="entry name" value="GAD_dom"/>
</dbReference>
<dbReference type="InterPro" id="IPR012340">
    <property type="entry name" value="NA-bd_OB-fold"/>
</dbReference>
<dbReference type="InterPro" id="IPR004365">
    <property type="entry name" value="NA-bd_OB_tRNA"/>
</dbReference>
<dbReference type="NCBIfam" id="TIGR00459">
    <property type="entry name" value="aspS_bact"/>
    <property type="match status" value="1"/>
</dbReference>
<dbReference type="NCBIfam" id="NF001750">
    <property type="entry name" value="PRK00476.1"/>
    <property type="match status" value="1"/>
</dbReference>
<dbReference type="PANTHER" id="PTHR22594:SF5">
    <property type="entry name" value="ASPARTATE--TRNA LIGASE, MITOCHONDRIAL"/>
    <property type="match status" value="1"/>
</dbReference>
<dbReference type="PANTHER" id="PTHR22594">
    <property type="entry name" value="ASPARTYL/LYSYL-TRNA SYNTHETASE"/>
    <property type="match status" value="1"/>
</dbReference>
<dbReference type="Pfam" id="PF02938">
    <property type="entry name" value="GAD"/>
    <property type="match status" value="1"/>
</dbReference>
<dbReference type="Pfam" id="PF00152">
    <property type="entry name" value="tRNA-synt_2"/>
    <property type="match status" value="1"/>
</dbReference>
<dbReference type="Pfam" id="PF01336">
    <property type="entry name" value="tRNA_anti-codon"/>
    <property type="match status" value="1"/>
</dbReference>
<dbReference type="PRINTS" id="PR01042">
    <property type="entry name" value="TRNASYNTHASP"/>
</dbReference>
<dbReference type="SUPFAM" id="SSF55681">
    <property type="entry name" value="Class II aaRS and biotin synthetases"/>
    <property type="match status" value="1"/>
</dbReference>
<dbReference type="SUPFAM" id="SSF55261">
    <property type="entry name" value="GAD domain-like"/>
    <property type="match status" value="1"/>
</dbReference>
<dbReference type="SUPFAM" id="SSF50249">
    <property type="entry name" value="Nucleic acid-binding proteins"/>
    <property type="match status" value="1"/>
</dbReference>
<dbReference type="PROSITE" id="PS50862">
    <property type="entry name" value="AA_TRNA_LIGASE_II"/>
    <property type="match status" value="1"/>
</dbReference>
<comment type="function">
    <text evidence="1">Aspartyl-tRNA synthetase with relaxed tRNA specificity since it is able to aspartylate not only its cognate tRNA(Asp) but also tRNA(Asn). Reaction proceeds in two steps: L-aspartate is first activated by ATP to form Asp-AMP and then transferred to the acceptor end of tRNA(Asp/Asn).</text>
</comment>
<comment type="catalytic activity">
    <reaction evidence="1">
        <text>tRNA(Asx) + L-aspartate + ATP = L-aspartyl-tRNA(Asx) + AMP + diphosphate</text>
        <dbReference type="Rhea" id="RHEA:18349"/>
        <dbReference type="Rhea" id="RHEA-COMP:9710"/>
        <dbReference type="Rhea" id="RHEA-COMP:9711"/>
        <dbReference type="ChEBI" id="CHEBI:29991"/>
        <dbReference type="ChEBI" id="CHEBI:30616"/>
        <dbReference type="ChEBI" id="CHEBI:33019"/>
        <dbReference type="ChEBI" id="CHEBI:78442"/>
        <dbReference type="ChEBI" id="CHEBI:78516"/>
        <dbReference type="ChEBI" id="CHEBI:456215"/>
        <dbReference type="EC" id="6.1.1.23"/>
    </reaction>
</comment>
<comment type="subunit">
    <text evidence="1">Homodimer.</text>
</comment>
<comment type="subcellular location">
    <subcellularLocation>
        <location evidence="1">Cytoplasm</location>
    </subcellularLocation>
</comment>
<comment type="similarity">
    <text evidence="1">Belongs to the class-II aminoacyl-tRNA synthetase family. Type 1 subfamily.</text>
</comment>